<protein>
    <recommendedName>
        <fullName>Uncharacterized oxidoreductase YurR</fullName>
        <ecNumber>1.-.-.-</ecNumber>
    </recommendedName>
</protein>
<reference key="1">
    <citation type="journal article" date="1997" name="Nature">
        <title>The complete genome sequence of the Gram-positive bacterium Bacillus subtilis.</title>
        <authorList>
            <person name="Kunst F."/>
            <person name="Ogasawara N."/>
            <person name="Moszer I."/>
            <person name="Albertini A.M."/>
            <person name="Alloni G."/>
            <person name="Azevedo V."/>
            <person name="Bertero M.G."/>
            <person name="Bessieres P."/>
            <person name="Bolotin A."/>
            <person name="Borchert S."/>
            <person name="Borriss R."/>
            <person name="Boursier L."/>
            <person name="Brans A."/>
            <person name="Braun M."/>
            <person name="Brignell S.C."/>
            <person name="Bron S."/>
            <person name="Brouillet S."/>
            <person name="Bruschi C.V."/>
            <person name="Caldwell B."/>
            <person name="Capuano V."/>
            <person name="Carter N.M."/>
            <person name="Choi S.-K."/>
            <person name="Codani J.-J."/>
            <person name="Connerton I.F."/>
            <person name="Cummings N.J."/>
            <person name="Daniel R.A."/>
            <person name="Denizot F."/>
            <person name="Devine K.M."/>
            <person name="Duesterhoeft A."/>
            <person name="Ehrlich S.D."/>
            <person name="Emmerson P.T."/>
            <person name="Entian K.-D."/>
            <person name="Errington J."/>
            <person name="Fabret C."/>
            <person name="Ferrari E."/>
            <person name="Foulger D."/>
            <person name="Fritz C."/>
            <person name="Fujita M."/>
            <person name="Fujita Y."/>
            <person name="Fuma S."/>
            <person name="Galizzi A."/>
            <person name="Galleron N."/>
            <person name="Ghim S.-Y."/>
            <person name="Glaser P."/>
            <person name="Goffeau A."/>
            <person name="Golightly E.J."/>
            <person name="Grandi G."/>
            <person name="Guiseppi G."/>
            <person name="Guy B.J."/>
            <person name="Haga K."/>
            <person name="Haiech J."/>
            <person name="Harwood C.R."/>
            <person name="Henaut A."/>
            <person name="Hilbert H."/>
            <person name="Holsappel S."/>
            <person name="Hosono S."/>
            <person name="Hullo M.-F."/>
            <person name="Itaya M."/>
            <person name="Jones L.-M."/>
            <person name="Joris B."/>
            <person name="Karamata D."/>
            <person name="Kasahara Y."/>
            <person name="Klaerr-Blanchard M."/>
            <person name="Klein C."/>
            <person name="Kobayashi Y."/>
            <person name="Koetter P."/>
            <person name="Koningstein G."/>
            <person name="Krogh S."/>
            <person name="Kumano M."/>
            <person name="Kurita K."/>
            <person name="Lapidus A."/>
            <person name="Lardinois S."/>
            <person name="Lauber J."/>
            <person name="Lazarevic V."/>
            <person name="Lee S.-M."/>
            <person name="Levine A."/>
            <person name="Liu H."/>
            <person name="Masuda S."/>
            <person name="Mauel C."/>
            <person name="Medigue C."/>
            <person name="Medina N."/>
            <person name="Mellado R.P."/>
            <person name="Mizuno M."/>
            <person name="Moestl D."/>
            <person name="Nakai S."/>
            <person name="Noback M."/>
            <person name="Noone D."/>
            <person name="O'Reilly M."/>
            <person name="Ogawa K."/>
            <person name="Ogiwara A."/>
            <person name="Oudega B."/>
            <person name="Park S.-H."/>
            <person name="Parro V."/>
            <person name="Pohl T.M."/>
            <person name="Portetelle D."/>
            <person name="Porwollik S."/>
            <person name="Prescott A.M."/>
            <person name="Presecan E."/>
            <person name="Pujic P."/>
            <person name="Purnelle B."/>
            <person name="Rapoport G."/>
            <person name="Rey M."/>
            <person name="Reynolds S."/>
            <person name="Rieger M."/>
            <person name="Rivolta C."/>
            <person name="Rocha E."/>
            <person name="Roche B."/>
            <person name="Rose M."/>
            <person name="Sadaie Y."/>
            <person name="Sato T."/>
            <person name="Scanlan E."/>
            <person name="Schleich S."/>
            <person name="Schroeter R."/>
            <person name="Scoffone F."/>
            <person name="Sekiguchi J."/>
            <person name="Sekowska A."/>
            <person name="Seror S.J."/>
            <person name="Serror P."/>
            <person name="Shin B.-S."/>
            <person name="Soldo B."/>
            <person name="Sorokin A."/>
            <person name="Tacconi E."/>
            <person name="Takagi T."/>
            <person name="Takahashi H."/>
            <person name="Takemaru K."/>
            <person name="Takeuchi M."/>
            <person name="Tamakoshi A."/>
            <person name="Tanaka T."/>
            <person name="Terpstra P."/>
            <person name="Tognoni A."/>
            <person name="Tosato V."/>
            <person name="Uchiyama S."/>
            <person name="Vandenbol M."/>
            <person name="Vannier F."/>
            <person name="Vassarotti A."/>
            <person name="Viari A."/>
            <person name="Wambutt R."/>
            <person name="Wedler E."/>
            <person name="Wedler H."/>
            <person name="Weitzenegger T."/>
            <person name="Winters P."/>
            <person name="Wipat A."/>
            <person name="Yamamoto H."/>
            <person name="Yamane K."/>
            <person name="Yasumoto K."/>
            <person name="Yata K."/>
            <person name="Yoshida K."/>
            <person name="Yoshikawa H.-F."/>
            <person name="Zumstein E."/>
            <person name="Yoshikawa H."/>
            <person name="Danchin A."/>
        </authorList>
    </citation>
    <scope>NUCLEOTIDE SEQUENCE [LARGE SCALE GENOMIC DNA]</scope>
    <source>
        <strain>168</strain>
    </source>
</reference>
<name>YURR_BACSU</name>
<comment type="cofactor">
    <cofactor evidence="2">
        <name>FAD</name>
        <dbReference type="ChEBI" id="CHEBI:57692"/>
    </cofactor>
</comment>
<comment type="similarity">
    <text evidence="2">Belongs to the DadA oxidoreductase family.</text>
</comment>
<dbReference type="EC" id="1.-.-.-"/>
<dbReference type="EMBL" id="AL009126">
    <property type="protein sequence ID" value="CAB15253.1"/>
    <property type="molecule type" value="Genomic_DNA"/>
</dbReference>
<dbReference type="PIR" id="A70019">
    <property type="entry name" value="A70019"/>
</dbReference>
<dbReference type="RefSeq" id="WP_003228615.1">
    <property type="nucleotide sequence ID" value="NZ_OZ025638.1"/>
</dbReference>
<dbReference type="SMR" id="O32159"/>
<dbReference type="FunCoup" id="O32159">
    <property type="interactions" value="464"/>
</dbReference>
<dbReference type="STRING" id="224308.BSU32630"/>
<dbReference type="PaxDb" id="224308-BSU32630"/>
<dbReference type="EnsemblBacteria" id="CAB15253">
    <property type="protein sequence ID" value="CAB15253"/>
    <property type="gene ID" value="BSU_32630"/>
</dbReference>
<dbReference type="GeneID" id="937069"/>
<dbReference type="KEGG" id="bsu:BSU32630"/>
<dbReference type="PATRIC" id="fig|224308.179.peg.3533"/>
<dbReference type="eggNOG" id="COG0665">
    <property type="taxonomic scope" value="Bacteria"/>
</dbReference>
<dbReference type="InParanoid" id="O32159"/>
<dbReference type="OrthoDB" id="9805337at2"/>
<dbReference type="PhylomeDB" id="O32159"/>
<dbReference type="BioCyc" id="BSUB:BSU32630-MONOMER"/>
<dbReference type="Proteomes" id="UP000001570">
    <property type="component" value="Chromosome"/>
</dbReference>
<dbReference type="GO" id="GO:0005737">
    <property type="term" value="C:cytoplasm"/>
    <property type="evidence" value="ECO:0000318"/>
    <property type="project" value="GO_Central"/>
</dbReference>
<dbReference type="GO" id="GO:0016491">
    <property type="term" value="F:oxidoreductase activity"/>
    <property type="evidence" value="ECO:0007669"/>
    <property type="project" value="UniProtKB-KW"/>
</dbReference>
<dbReference type="Gene3D" id="3.30.9.10">
    <property type="entry name" value="D-Amino Acid Oxidase, subunit A, domain 2"/>
    <property type="match status" value="1"/>
</dbReference>
<dbReference type="Gene3D" id="3.50.50.60">
    <property type="entry name" value="FAD/NAD(P)-binding domain"/>
    <property type="match status" value="1"/>
</dbReference>
<dbReference type="InterPro" id="IPR006076">
    <property type="entry name" value="FAD-dep_OxRdtase"/>
</dbReference>
<dbReference type="InterPro" id="IPR036188">
    <property type="entry name" value="FAD/NAD-bd_sf"/>
</dbReference>
<dbReference type="PANTHER" id="PTHR13847:SF286">
    <property type="entry name" value="D-AMINO ACID DEHYDROGENASE"/>
    <property type="match status" value="1"/>
</dbReference>
<dbReference type="PANTHER" id="PTHR13847">
    <property type="entry name" value="SARCOSINE DEHYDROGENASE-RELATED"/>
    <property type="match status" value="1"/>
</dbReference>
<dbReference type="Pfam" id="PF01266">
    <property type="entry name" value="DAO"/>
    <property type="match status" value="1"/>
</dbReference>
<dbReference type="SUPFAM" id="SSF54373">
    <property type="entry name" value="FAD-linked reductases, C-terminal domain"/>
    <property type="match status" value="1"/>
</dbReference>
<dbReference type="SUPFAM" id="SSF51905">
    <property type="entry name" value="FAD/NAD(P)-binding domain"/>
    <property type="match status" value="1"/>
</dbReference>
<organism>
    <name type="scientific">Bacillus subtilis (strain 168)</name>
    <dbReference type="NCBI Taxonomy" id="224308"/>
    <lineage>
        <taxon>Bacteria</taxon>
        <taxon>Bacillati</taxon>
        <taxon>Bacillota</taxon>
        <taxon>Bacilli</taxon>
        <taxon>Bacillales</taxon>
        <taxon>Bacillaceae</taxon>
        <taxon>Bacillus</taxon>
    </lineage>
</organism>
<proteinExistence type="inferred from homology"/>
<keyword id="KW-0274">FAD</keyword>
<keyword id="KW-0285">Flavoprotein</keyword>
<keyword id="KW-0560">Oxidoreductase</keyword>
<keyword id="KW-1185">Reference proteome</keyword>
<accession>O32159</accession>
<feature type="chain" id="PRO_0000166161" description="Uncharacterized oxidoreductase YurR">
    <location>
        <begin position="1"/>
        <end position="372"/>
    </location>
</feature>
<feature type="binding site" evidence="1">
    <location>
        <begin position="4"/>
        <end position="18"/>
    </location>
    <ligand>
        <name>FAD</name>
        <dbReference type="ChEBI" id="CHEBI:57692"/>
    </ligand>
</feature>
<sequence length="372" mass="39450">MKSYIIVGAGILGASTAYHLAKTGARVTVIDRKEPGQATDAAAGIVCPWLSQRRNQDWYQLAKGGARYYKDLIHQLEKDGESDTGYKRVGAISIHTDASKLDKMEERAYKRREDAPEIGDITRLSASETKKLFPILADGYESVHISGAARVNGRALCRSLLSAAEKRGATVIKGNASLLFENGTVTGVQTDTKQFAADAVIVTAGAWANEILKPLGIHFQVSFQKAQIMHFEMTDADTGSWPVVMPPSDQYILSFDNGRIVAGATHENDAGLDDLRVTAGGQHEVLSKALAVAPGLADAAAVETRVGFRPFTPGFLPVVGAVPNVQGLYAANGLGASGLTMGPFLGAELAKLVLGKQTELDLSPYDPAGALA</sequence>
<evidence type="ECO:0000255" key="1"/>
<evidence type="ECO:0000305" key="2"/>
<gene>
    <name type="primary">yurR</name>
    <name type="ordered locus">BSU32630</name>
</gene>